<name>PHNI_RHIME</name>
<evidence type="ECO:0000250" key="1"/>
<evidence type="ECO:0000305" key="2"/>
<organism>
    <name type="scientific">Rhizobium meliloti (strain 1021)</name>
    <name type="common">Ensifer meliloti</name>
    <name type="synonym">Sinorhizobium meliloti</name>
    <dbReference type="NCBI Taxonomy" id="266834"/>
    <lineage>
        <taxon>Bacteria</taxon>
        <taxon>Pseudomonadati</taxon>
        <taxon>Pseudomonadota</taxon>
        <taxon>Alphaproteobacteria</taxon>
        <taxon>Hyphomicrobiales</taxon>
        <taxon>Rhizobiaceae</taxon>
        <taxon>Sinorhizobium/Ensifer group</taxon>
        <taxon>Sinorhizobium</taxon>
    </lineage>
</organism>
<proteinExistence type="inferred from homology"/>
<dbReference type="EC" id="2.7.8.37"/>
<dbReference type="EMBL" id="M96263">
    <property type="protein sequence ID" value="AAA26352.1"/>
    <property type="molecule type" value="Genomic_DNA"/>
</dbReference>
<dbReference type="EMBL" id="AL591985">
    <property type="protein sequence ID" value="CAC49853.1"/>
    <property type="molecule type" value="Genomic_DNA"/>
</dbReference>
<dbReference type="PIR" id="E96023">
    <property type="entry name" value="E96023"/>
</dbReference>
<dbReference type="RefSeq" id="NP_437993.1">
    <property type="nucleotide sequence ID" value="NC_003078.1"/>
</dbReference>
<dbReference type="RefSeq" id="WP_003530629.1">
    <property type="nucleotide sequence ID" value="NC_003078.1"/>
</dbReference>
<dbReference type="SMR" id="Q52986"/>
<dbReference type="EnsemblBacteria" id="CAC49853">
    <property type="protein sequence ID" value="CAC49853"/>
    <property type="gene ID" value="SM_b20761"/>
</dbReference>
<dbReference type="KEGG" id="sme:SM_b20761"/>
<dbReference type="PATRIC" id="fig|266834.11.peg.6379"/>
<dbReference type="eggNOG" id="COG3626">
    <property type="taxonomic scope" value="Bacteria"/>
</dbReference>
<dbReference type="HOGENOM" id="CLU_063686_0_0_5"/>
<dbReference type="OrthoDB" id="9790536at2"/>
<dbReference type="BioCyc" id="MetaCyc:MONOMER-19920"/>
<dbReference type="Proteomes" id="UP000001976">
    <property type="component" value="Plasmid pSymB"/>
</dbReference>
<dbReference type="GO" id="GO:0061693">
    <property type="term" value="F:alpha-D-ribose 1-methylphosphonate 5-triphosphate synthase activity"/>
    <property type="evidence" value="ECO:0007669"/>
    <property type="project" value="UniProtKB-EC"/>
</dbReference>
<dbReference type="GO" id="GO:0019634">
    <property type="term" value="P:organic phosphonate metabolic process"/>
    <property type="evidence" value="ECO:0007669"/>
    <property type="project" value="InterPro"/>
</dbReference>
<dbReference type="InterPro" id="IPR008773">
    <property type="entry name" value="PhnI"/>
</dbReference>
<dbReference type="Pfam" id="PF05861">
    <property type="entry name" value="PhnI"/>
    <property type="match status" value="1"/>
</dbReference>
<dbReference type="PIRSF" id="PIRSF007313">
    <property type="entry name" value="PhnI"/>
    <property type="match status" value="1"/>
</dbReference>
<comment type="function">
    <text evidence="1">Together with PhnG, PhnH and PhnL is required for the transfer of the ribose triphosphate moiety from ATP to methyl phosphonate.</text>
</comment>
<comment type="catalytic activity">
    <reaction>
        <text>methylphosphonate + ATP = alpha-D-ribose 1-methylphosphonate 5-triphosphate + adenine</text>
        <dbReference type="Rhea" id="RHEA:34679"/>
        <dbReference type="ChEBI" id="CHEBI:16708"/>
        <dbReference type="ChEBI" id="CHEBI:30616"/>
        <dbReference type="ChEBI" id="CHEBI:68684"/>
        <dbReference type="ChEBI" id="CHEBI:68823"/>
        <dbReference type="EC" id="2.7.8.37"/>
    </reaction>
</comment>
<comment type="similarity">
    <text evidence="2">Belongs to the PhnI family.</text>
</comment>
<keyword id="KW-0614">Plasmid</keyword>
<keyword id="KW-1185">Reference proteome</keyword>
<keyword id="KW-0808">Transferase</keyword>
<geneLocation type="plasmid">
    <name>pSymB</name>
    <name>megaplasmid 2</name>
</geneLocation>
<sequence>MYVAVKGGEAAIANAHRLLADRRRGDRALPAITIDQVVEQLGLAVDRVMAEASLYDRALAALAVRQARGDMIEAIFILRAYRTTLPRFGYCEPVDTAKMKVERRVSATYKDLPGGQLLGPTFDYTHRLLDPSLIGEEPVDEPVLKEPGEHVMRVSDILDGEGLIEGDGKMPEGHVAGDLTREPMEFPMARDLRLQALARGDEGFLLALAYSTQRGYGRTHPFVGEVRIGEVEVELELPELGFAVSLGVIRVTECQMVNQFKGSSRQPPQFTRGYGLVFGQSERKAMSMSLVDRALRTDEFDEDIVAPAQDQEFVISHADNVQATGFVEHLKLPHYVDFQAELDLVRRMRREHDAAQAGGKDGMKEAAE</sequence>
<protein>
    <recommendedName>
        <fullName>Alpha-D-ribose 1-methylphosphonate 5-triphosphate synthase subunit PhnI</fullName>
        <shortName>RPnTP synthase subunit PhnI</shortName>
        <ecNumber>2.7.8.37</ecNumber>
    </recommendedName>
    <alternativeName>
        <fullName>Ribose 1-methylphosphonate 5-triphosphate synthase nucleosidase subunit</fullName>
    </alternativeName>
</protein>
<accession>Q52986</accession>
<gene>
    <name type="primary">phnI</name>
    <name type="ordered locus">RB1453</name>
    <name type="ORF">SMb20761</name>
</gene>
<reference key="1">
    <citation type="submission" date="1992-11" db="EMBL/GenBank/DDBJ databases">
        <title>Characterization of a gene cluster involved in utilization of glyphosate and other phosphonates in Rhizobium meliloti.</title>
        <authorList>
            <person name="McLean P.A."/>
            <person name="Liu C.M."/>
            <person name="Sookdeo C.C."/>
            <person name="Cannon F.C."/>
        </authorList>
    </citation>
    <scope>NUCLEOTIDE SEQUENCE [GENOMIC DNA]</scope>
    <source>
        <strain>1021</strain>
    </source>
</reference>
<reference key="2">
    <citation type="journal article" date="2001" name="Proc. Natl. Acad. Sci. U.S.A.">
        <title>The complete sequence of the 1,683-kb pSymB megaplasmid from the N2-fixing endosymbiont Sinorhizobium meliloti.</title>
        <authorList>
            <person name="Finan T.M."/>
            <person name="Weidner S."/>
            <person name="Wong K."/>
            <person name="Buhrmester J."/>
            <person name="Chain P."/>
            <person name="Vorhoelter F.J."/>
            <person name="Hernandez-Lucas I."/>
            <person name="Becker A."/>
            <person name="Cowie A."/>
            <person name="Gouzy J."/>
            <person name="Golding B."/>
            <person name="Puehler A."/>
        </authorList>
    </citation>
    <scope>NUCLEOTIDE SEQUENCE [LARGE SCALE GENOMIC DNA]</scope>
    <source>
        <strain>1021</strain>
    </source>
</reference>
<reference key="3">
    <citation type="journal article" date="2001" name="Science">
        <title>The composite genome of the legume symbiont Sinorhizobium meliloti.</title>
        <authorList>
            <person name="Galibert F."/>
            <person name="Finan T.M."/>
            <person name="Long S.R."/>
            <person name="Puehler A."/>
            <person name="Abola P."/>
            <person name="Ampe F."/>
            <person name="Barloy-Hubler F."/>
            <person name="Barnett M.J."/>
            <person name="Becker A."/>
            <person name="Boistard P."/>
            <person name="Bothe G."/>
            <person name="Boutry M."/>
            <person name="Bowser L."/>
            <person name="Buhrmester J."/>
            <person name="Cadieu E."/>
            <person name="Capela D."/>
            <person name="Chain P."/>
            <person name="Cowie A."/>
            <person name="Davis R.W."/>
            <person name="Dreano S."/>
            <person name="Federspiel N.A."/>
            <person name="Fisher R.F."/>
            <person name="Gloux S."/>
            <person name="Godrie T."/>
            <person name="Goffeau A."/>
            <person name="Golding B."/>
            <person name="Gouzy J."/>
            <person name="Gurjal M."/>
            <person name="Hernandez-Lucas I."/>
            <person name="Hong A."/>
            <person name="Huizar L."/>
            <person name="Hyman R.W."/>
            <person name="Jones T."/>
            <person name="Kahn D."/>
            <person name="Kahn M.L."/>
            <person name="Kalman S."/>
            <person name="Keating D.H."/>
            <person name="Kiss E."/>
            <person name="Komp C."/>
            <person name="Lelaure V."/>
            <person name="Masuy D."/>
            <person name="Palm C."/>
            <person name="Peck M.C."/>
            <person name="Pohl T.M."/>
            <person name="Portetelle D."/>
            <person name="Purnelle B."/>
            <person name="Ramsperger U."/>
            <person name="Surzycki R."/>
            <person name="Thebault P."/>
            <person name="Vandenbol M."/>
            <person name="Vorhoelter F.J."/>
            <person name="Weidner S."/>
            <person name="Wells D.H."/>
            <person name="Wong K."/>
            <person name="Yeh K.-C."/>
            <person name="Batut J."/>
        </authorList>
    </citation>
    <scope>NUCLEOTIDE SEQUENCE [LARGE SCALE GENOMIC DNA]</scope>
    <source>
        <strain>1021</strain>
    </source>
</reference>
<feature type="chain" id="PRO_0000058396" description="Alpha-D-ribose 1-methylphosphonate 5-triphosphate synthase subunit PhnI">
    <location>
        <begin position="1"/>
        <end position="368"/>
    </location>
</feature>